<sequence length="20" mass="2036">GLTQKDLVALSGAHTIGKAR</sequence>
<comment type="function">
    <text evidence="4">Removal of H(2)O(2), oxidation of toxic reductants, biosynthesis and degradation of lignin, suberization, auxin catabolism, response to environmental stresses such as wounding, pathogen attack and oxidative stress. These functions might be dependent on each isozyme/isoform in each plant tissue.</text>
</comment>
<comment type="catalytic activity">
    <reaction>
        <text>2 a phenolic donor + H2O2 = 2 a phenolic radical donor + 2 H2O</text>
        <dbReference type="Rhea" id="RHEA:56136"/>
        <dbReference type="ChEBI" id="CHEBI:15377"/>
        <dbReference type="ChEBI" id="CHEBI:16240"/>
        <dbReference type="ChEBI" id="CHEBI:139520"/>
        <dbReference type="ChEBI" id="CHEBI:139521"/>
        <dbReference type="EC" id="1.11.1.7"/>
    </reaction>
</comment>
<comment type="cofactor">
    <cofactor evidence="1 3">
        <name>Ca(2+)</name>
        <dbReference type="ChEBI" id="CHEBI:29108"/>
    </cofactor>
    <text evidence="1 3">Binds 2 calcium ions per subunit.</text>
</comment>
<comment type="cofactor">
    <cofactor evidence="1 3">
        <name>heme b</name>
        <dbReference type="ChEBI" id="CHEBI:60344"/>
    </cofactor>
    <text evidence="1 3">Binds 1 heme b (iron(II)-protoporphyrin IX) group per subunit.</text>
</comment>
<comment type="subcellular location">
    <subcellularLocation>
        <location evidence="2 3">Secreted</location>
    </subcellularLocation>
</comment>
<comment type="similarity">
    <text evidence="3">Belongs to the peroxidase family. Classical plant (class III) peroxidase subfamily.</text>
</comment>
<keyword id="KW-0106">Calcium</keyword>
<keyword id="KW-0903">Direct protein sequencing</keyword>
<keyword id="KW-0349">Heme</keyword>
<keyword id="KW-0376">Hydrogen peroxide</keyword>
<keyword id="KW-0408">Iron</keyword>
<keyword id="KW-0479">Metal-binding</keyword>
<keyword id="KW-0560">Oxidoreductase</keyword>
<keyword id="KW-0575">Peroxidase</keyword>
<keyword id="KW-0964">Secreted</keyword>
<evidence type="ECO:0000250" key="1">
    <source>
        <dbReference type="UniProtKB" id="P80679"/>
    </source>
</evidence>
<evidence type="ECO:0000250" key="2">
    <source>
        <dbReference type="UniProtKB" id="P84516"/>
    </source>
</evidence>
<evidence type="ECO:0000255" key="3">
    <source>
        <dbReference type="PROSITE-ProRule" id="PRU00297"/>
    </source>
</evidence>
<evidence type="ECO:0000305" key="4"/>
<name>PER1_BETPN</name>
<reference key="1">
    <citation type="journal article" date="2009" name="Physiol. Plantarum">
        <title>The presence of sinapyl lignin in Ginkgo biloba cell cultures changes our views of the evolution of lignin biosynthesis.</title>
        <authorList>
            <person name="Novo Uzal E."/>
            <person name="Gomez Ros L.V."/>
            <person name="Pomar F."/>
            <person name="Bernal M.A."/>
            <person name="Paradela A."/>
            <person name="Albar J.P."/>
            <person name="Ros Barcelo A."/>
        </authorList>
    </citation>
    <scope>PROTEIN SEQUENCE</scope>
    <source>
        <strain>PC-1121</strain>
        <tissue>Callus</tissue>
    </source>
</reference>
<organism>
    <name type="scientific">Betula pendula</name>
    <name type="common">European white birch</name>
    <name type="synonym">Betula verrucosa</name>
    <dbReference type="NCBI Taxonomy" id="3505"/>
    <lineage>
        <taxon>Eukaryota</taxon>
        <taxon>Viridiplantae</taxon>
        <taxon>Streptophyta</taxon>
        <taxon>Embryophyta</taxon>
        <taxon>Tracheophyta</taxon>
        <taxon>Spermatophyta</taxon>
        <taxon>Magnoliopsida</taxon>
        <taxon>eudicotyledons</taxon>
        <taxon>Gunneridae</taxon>
        <taxon>Pentapetalae</taxon>
        <taxon>rosids</taxon>
        <taxon>fabids</taxon>
        <taxon>Fagales</taxon>
        <taxon>Betulaceae</taxon>
        <taxon>Betula</taxon>
    </lineage>
</organism>
<accession>P85331</accession>
<protein>
    <recommendedName>
        <fullName>Peroxidase 1</fullName>
        <ecNumber>1.11.1.7</ecNumber>
    </recommendedName>
</protein>
<feature type="chain" id="PRO_0000314638" description="Peroxidase 1">
    <location>
        <begin position="1" status="less than"/>
        <end position="20" status="greater than"/>
    </location>
</feature>
<feature type="binding site" description="axial binding residue" evidence="1 3">
    <location>
        <position position="14"/>
    </location>
    <ligand>
        <name>heme</name>
        <dbReference type="ChEBI" id="CHEBI:30413"/>
    </ligand>
    <ligandPart>
        <name>Fe</name>
        <dbReference type="ChEBI" id="CHEBI:18248"/>
    </ligandPart>
</feature>
<feature type="binding site" evidence="1 3">
    <location>
        <position position="15"/>
    </location>
    <ligand>
        <name>Ca(2+)</name>
        <dbReference type="ChEBI" id="CHEBI:29108"/>
        <label>2</label>
    </ligand>
</feature>
<feature type="non-terminal residue">
    <location>
        <position position="1"/>
    </location>
</feature>
<feature type="non-terminal residue">
    <location>
        <position position="20"/>
    </location>
</feature>
<proteinExistence type="evidence at protein level"/>
<dbReference type="EC" id="1.11.1.7"/>
<dbReference type="GO" id="GO:0005576">
    <property type="term" value="C:extracellular region"/>
    <property type="evidence" value="ECO:0007669"/>
    <property type="project" value="UniProtKB-SubCell"/>
</dbReference>
<dbReference type="GO" id="GO:0020037">
    <property type="term" value="F:heme binding"/>
    <property type="evidence" value="ECO:0007669"/>
    <property type="project" value="InterPro"/>
</dbReference>
<dbReference type="GO" id="GO:0140825">
    <property type="term" value="F:lactoperoxidase activity"/>
    <property type="evidence" value="ECO:0007669"/>
    <property type="project" value="UniProtKB-EC"/>
</dbReference>
<dbReference type="GO" id="GO:0046872">
    <property type="term" value="F:metal ion binding"/>
    <property type="evidence" value="ECO:0007669"/>
    <property type="project" value="UniProtKB-KW"/>
</dbReference>
<dbReference type="GO" id="GO:0042744">
    <property type="term" value="P:hydrogen peroxide catabolic process"/>
    <property type="evidence" value="ECO:0007669"/>
    <property type="project" value="UniProtKB-KW"/>
</dbReference>
<dbReference type="GO" id="GO:0006979">
    <property type="term" value="P:response to oxidative stress"/>
    <property type="evidence" value="ECO:0007669"/>
    <property type="project" value="InterPro"/>
</dbReference>
<dbReference type="Gene3D" id="1.10.420.10">
    <property type="entry name" value="Peroxidase, domain 2"/>
    <property type="match status" value="1"/>
</dbReference>
<dbReference type="InterPro" id="IPR002016">
    <property type="entry name" value="Haem_peroxidase"/>
</dbReference>
<dbReference type="InterPro" id="IPR010255">
    <property type="entry name" value="Haem_peroxidase_sf"/>
</dbReference>
<dbReference type="InterPro" id="IPR019793">
    <property type="entry name" value="Peroxidases_heam-ligand_BS"/>
</dbReference>
<dbReference type="Pfam" id="PF00141">
    <property type="entry name" value="peroxidase"/>
    <property type="match status" value="1"/>
</dbReference>
<dbReference type="SUPFAM" id="SSF48113">
    <property type="entry name" value="Heme-dependent peroxidases"/>
    <property type="match status" value="1"/>
</dbReference>
<dbReference type="PROSITE" id="PS00435">
    <property type="entry name" value="PEROXIDASE_1"/>
    <property type="match status" value="1"/>
</dbReference>